<gene>
    <name type="primary">RGR1</name>
    <name type="synonym">MED14</name>
    <name type="ordered locus">KLLA0D05533g</name>
</gene>
<feature type="chain" id="PRO_0000304603" description="Mediator of RNA polymerase II transcription subunit 14">
    <location>
        <begin position="1"/>
        <end position="998"/>
    </location>
</feature>
<reference key="1">
    <citation type="journal article" date="2004" name="Nature">
        <title>Genome evolution in yeasts.</title>
        <authorList>
            <person name="Dujon B."/>
            <person name="Sherman D."/>
            <person name="Fischer G."/>
            <person name="Durrens P."/>
            <person name="Casaregola S."/>
            <person name="Lafontaine I."/>
            <person name="de Montigny J."/>
            <person name="Marck C."/>
            <person name="Neuveglise C."/>
            <person name="Talla E."/>
            <person name="Goffard N."/>
            <person name="Frangeul L."/>
            <person name="Aigle M."/>
            <person name="Anthouard V."/>
            <person name="Babour A."/>
            <person name="Barbe V."/>
            <person name="Barnay S."/>
            <person name="Blanchin S."/>
            <person name="Beckerich J.-M."/>
            <person name="Beyne E."/>
            <person name="Bleykasten C."/>
            <person name="Boisrame A."/>
            <person name="Boyer J."/>
            <person name="Cattolico L."/>
            <person name="Confanioleri F."/>
            <person name="de Daruvar A."/>
            <person name="Despons L."/>
            <person name="Fabre E."/>
            <person name="Fairhead C."/>
            <person name="Ferry-Dumazet H."/>
            <person name="Groppi A."/>
            <person name="Hantraye F."/>
            <person name="Hennequin C."/>
            <person name="Jauniaux N."/>
            <person name="Joyet P."/>
            <person name="Kachouri R."/>
            <person name="Kerrest A."/>
            <person name="Koszul R."/>
            <person name="Lemaire M."/>
            <person name="Lesur I."/>
            <person name="Ma L."/>
            <person name="Muller H."/>
            <person name="Nicaud J.-M."/>
            <person name="Nikolski M."/>
            <person name="Oztas S."/>
            <person name="Ozier-Kalogeropoulos O."/>
            <person name="Pellenz S."/>
            <person name="Potier S."/>
            <person name="Richard G.-F."/>
            <person name="Straub M.-L."/>
            <person name="Suleau A."/>
            <person name="Swennen D."/>
            <person name="Tekaia F."/>
            <person name="Wesolowski-Louvel M."/>
            <person name="Westhof E."/>
            <person name="Wirth B."/>
            <person name="Zeniou-Meyer M."/>
            <person name="Zivanovic Y."/>
            <person name="Bolotin-Fukuhara M."/>
            <person name="Thierry A."/>
            <person name="Bouchier C."/>
            <person name="Caudron B."/>
            <person name="Scarpelli C."/>
            <person name="Gaillardin C."/>
            <person name="Weissenbach J."/>
            <person name="Wincker P."/>
            <person name="Souciet J.-L."/>
        </authorList>
    </citation>
    <scope>NUCLEOTIDE SEQUENCE [LARGE SCALE GENOMIC DNA]</scope>
    <source>
        <strain>ATCC 8585 / CBS 2359 / DSM 70799 / NBRC 1267 / NRRL Y-1140 / WM37</strain>
    </source>
</reference>
<name>MED14_KLULA</name>
<comment type="function">
    <text evidence="1">Component of the Mediator complex, a coactivator involved in the regulated transcription of nearly all RNA polymerase II-dependent genes. Mediator functions as a bridge to convey information from gene-specific regulatory proteins to the basal RNA polymerase II transcription machinery. Mediator is recruited to promoters by direct interactions with regulatory proteins and serves as a scaffold for the assembly of a functional preinitiation complex with RNA polymerase II and the general transcription factors (By similarity).</text>
</comment>
<comment type="subunit">
    <text evidence="1">Component of the Mediator complex.</text>
</comment>
<comment type="subcellular location">
    <subcellularLocation>
        <location evidence="2">Nucleus</location>
    </subcellularLocation>
</comment>
<comment type="similarity">
    <text evidence="2">Belongs to the Mediator complex subunit 14 family.</text>
</comment>
<sequence length="998" mass="114179">MTTDVAPGTMENETSKVMSLKHKAAYVPPPIPHVEMNQLPLSLLLRNLTVFTAKEISQFFKLNVHTGGKTPFEKKLELLNMILFLRNQFLKLYVLVKWAKTLKQNNFHSLIDLLNWFRNANMQVNNCTMALKQILGTMAGAKLPNPDLATSLEVLMLGRPNLPNHGFNLNGSQSDNLTIPNKLILKRLRDLNTCLSIKISLMTIPSQLAKYEIKDGRIVFTVKDEFELQLSTIDQNSPLFFVNINLLFNERLPLNLARLEKHINEILFKSTNPLCLVYQFLHKYILTLQMYMIHVELNALGLNGKYSGGHLVHNYDSKKQIITIKYWLQSKIANTCKCVVGMDKETESIVLEWQNPDVNKETVTTRYHGLLNNIESIIDEITFNHAQMIRADLLRTDTFQEDNEDTTSTSLLFQIPTTCATVSQIQLKIDQVSGIFYFHNPSNLLLSYARQINQSSNTQDLITVLGRLKLDKVDSILRHMLDKTGWICSDVVRLKSSIVPSTDSTFSKDIFVKLKDWPSNWFLVLTIISSTNTCIVEKRIGKILSVKGVWKLKYMDKKNVITSKLDTMTYPKMLTLQISILNKIVNHMIIDSLNELKIKNKICTFTTEDSNILPPYIIRKDGKENTDNITVIALGLESFLEGSKALNTILESSMLLKIDYQKMDIELYGKFKTDNEMIRCQCDELSIKFLEEDSLSFFMSENFGNLNDIMLYLSKFRKKLTQLIALTDVMDTLHSNFQSMDFRVVELRPNEIRFKYLPMKDSPDNEDCVIRIVTNQEKVEKLDIKLSEHNPQAMIQRFLDEKEGFAHNFIFHYLQFTLPLFRASKEADYTSSSPSTVKMHLFMHSLQEFHFLYRNHKVGGELSFIIQLRSVVRTRHQENTQYFVRFAQDYSQPQLQQQHPLSKAIAEIQKNAFSLALLKEQNSNTTSSTTTAGTATAGATMISTASSNKLLDLQDSSPTNAAVDWSSIKCVRLGSALACSHDQILPLLLQFHKSISDC</sequence>
<organism>
    <name type="scientific">Kluyveromyces lactis (strain ATCC 8585 / CBS 2359 / DSM 70799 / NBRC 1267 / NRRL Y-1140 / WM37)</name>
    <name type="common">Yeast</name>
    <name type="synonym">Candida sphaerica</name>
    <dbReference type="NCBI Taxonomy" id="284590"/>
    <lineage>
        <taxon>Eukaryota</taxon>
        <taxon>Fungi</taxon>
        <taxon>Dikarya</taxon>
        <taxon>Ascomycota</taxon>
        <taxon>Saccharomycotina</taxon>
        <taxon>Saccharomycetes</taxon>
        <taxon>Saccharomycetales</taxon>
        <taxon>Saccharomycetaceae</taxon>
        <taxon>Kluyveromyces</taxon>
    </lineage>
</organism>
<keyword id="KW-0010">Activator</keyword>
<keyword id="KW-0539">Nucleus</keyword>
<keyword id="KW-1185">Reference proteome</keyword>
<keyword id="KW-0804">Transcription</keyword>
<keyword id="KW-0805">Transcription regulation</keyword>
<dbReference type="EMBL" id="CR382124">
    <property type="protein sequence ID" value="CAH00403.1"/>
    <property type="molecule type" value="Genomic_DNA"/>
</dbReference>
<dbReference type="RefSeq" id="XP_453307.1">
    <property type="nucleotide sequence ID" value="XM_453307.1"/>
</dbReference>
<dbReference type="SMR" id="Q6CRY2"/>
<dbReference type="FunCoup" id="Q6CRY2">
    <property type="interactions" value="303"/>
</dbReference>
<dbReference type="STRING" id="284590.Q6CRY2"/>
<dbReference type="PaxDb" id="284590-Q6CRY2"/>
<dbReference type="KEGG" id="kla:KLLA0_D05533g"/>
<dbReference type="eggNOG" id="KOG1875">
    <property type="taxonomic scope" value="Eukaryota"/>
</dbReference>
<dbReference type="HOGENOM" id="CLU_286680_0_0_1"/>
<dbReference type="InParanoid" id="Q6CRY2"/>
<dbReference type="OMA" id="MIDLLNW"/>
<dbReference type="Proteomes" id="UP000000598">
    <property type="component" value="Chromosome D"/>
</dbReference>
<dbReference type="GO" id="GO:0070847">
    <property type="term" value="C:core mediator complex"/>
    <property type="evidence" value="ECO:0007669"/>
    <property type="project" value="TreeGrafter"/>
</dbReference>
<dbReference type="GO" id="GO:0016592">
    <property type="term" value="C:mediator complex"/>
    <property type="evidence" value="ECO:0007669"/>
    <property type="project" value="InterPro"/>
</dbReference>
<dbReference type="GO" id="GO:0003712">
    <property type="term" value="F:transcription coregulator activity"/>
    <property type="evidence" value="ECO:0007669"/>
    <property type="project" value="InterPro"/>
</dbReference>
<dbReference type="GO" id="GO:0006357">
    <property type="term" value="P:regulation of transcription by RNA polymerase II"/>
    <property type="evidence" value="ECO:0007669"/>
    <property type="project" value="InterPro"/>
</dbReference>
<dbReference type="InterPro" id="IPR055122">
    <property type="entry name" value="Med14_N"/>
</dbReference>
<dbReference type="InterPro" id="IPR013947">
    <property type="entry name" value="Mediator_Med14"/>
</dbReference>
<dbReference type="PANTHER" id="PTHR12809">
    <property type="entry name" value="MEDIATOR COMPLEX SUBUNIT"/>
    <property type="match status" value="1"/>
</dbReference>
<dbReference type="PANTHER" id="PTHR12809:SF2">
    <property type="entry name" value="MEDIATOR OF RNA POLYMERASE II TRANSCRIPTION SUBUNIT 14"/>
    <property type="match status" value="1"/>
</dbReference>
<dbReference type="Pfam" id="PF08638">
    <property type="entry name" value="Med14"/>
    <property type="match status" value="1"/>
</dbReference>
<evidence type="ECO:0000250" key="1"/>
<evidence type="ECO:0000305" key="2"/>
<protein>
    <recommendedName>
        <fullName>Mediator of RNA polymerase II transcription subunit 14</fullName>
    </recommendedName>
    <alternativeName>
        <fullName>Mediator complex subunit 14</fullName>
    </alternativeName>
</protein>
<accession>Q6CRY2</accession>
<proteinExistence type="inferred from homology"/>